<reference key="1">
    <citation type="journal article" date="2009" name="J. Bacteriol.">
        <title>Genomic sequencing reveals regulatory mutations and recombinational events in the widely used MC4100 lineage of Escherichia coli K-12.</title>
        <authorList>
            <person name="Ferenci T."/>
            <person name="Zhou Z."/>
            <person name="Betteridge T."/>
            <person name="Ren Y."/>
            <person name="Liu Y."/>
            <person name="Feng L."/>
            <person name="Reeves P.R."/>
            <person name="Wang L."/>
        </authorList>
    </citation>
    <scope>NUCLEOTIDE SEQUENCE [LARGE SCALE GENOMIC DNA]</scope>
    <source>
        <strain>K12 / MC4100 / BW2952</strain>
    </source>
</reference>
<name>KDPB_ECOBW</name>
<keyword id="KW-0067">ATP-binding</keyword>
<keyword id="KW-0997">Cell inner membrane</keyword>
<keyword id="KW-1003">Cell membrane</keyword>
<keyword id="KW-0406">Ion transport</keyword>
<keyword id="KW-0460">Magnesium</keyword>
<keyword id="KW-0472">Membrane</keyword>
<keyword id="KW-0479">Metal-binding</keyword>
<keyword id="KW-0547">Nucleotide-binding</keyword>
<keyword id="KW-0597">Phosphoprotein</keyword>
<keyword id="KW-0630">Potassium</keyword>
<keyword id="KW-0633">Potassium transport</keyword>
<keyword id="KW-1278">Translocase</keyword>
<keyword id="KW-0812">Transmembrane</keyword>
<keyword id="KW-1133">Transmembrane helix</keyword>
<keyword id="KW-0813">Transport</keyword>
<protein>
    <recommendedName>
        <fullName evidence="1">Potassium-transporting ATPase ATP-binding subunit</fullName>
        <ecNumber evidence="1">7.2.2.6</ecNumber>
    </recommendedName>
    <alternativeName>
        <fullName evidence="1">ATP phosphohydrolase [potassium-transporting] B chain</fullName>
    </alternativeName>
    <alternativeName>
        <fullName evidence="1">Potassium-binding and translocating subunit B</fullName>
    </alternativeName>
    <alternativeName>
        <fullName evidence="1">Potassium-translocating ATPase B chain</fullName>
    </alternativeName>
</protein>
<dbReference type="EC" id="7.2.2.6" evidence="1"/>
<dbReference type="EMBL" id="CP001396">
    <property type="protein sequence ID" value="ACR64082.1"/>
    <property type="molecule type" value="Genomic_DNA"/>
</dbReference>
<dbReference type="RefSeq" id="WP_000087939.1">
    <property type="nucleotide sequence ID" value="NC_012759.1"/>
</dbReference>
<dbReference type="SMR" id="C4ZWH3"/>
<dbReference type="KEGG" id="ebw:BWG_0557"/>
<dbReference type="HOGENOM" id="CLU_025728_2_0_6"/>
<dbReference type="GO" id="GO:0005886">
    <property type="term" value="C:plasma membrane"/>
    <property type="evidence" value="ECO:0007669"/>
    <property type="project" value="UniProtKB-SubCell"/>
</dbReference>
<dbReference type="GO" id="GO:0005524">
    <property type="term" value="F:ATP binding"/>
    <property type="evidence" value="ECO:0007669"/>
    <property type="project" value="UniProtKB-UniRule"/>
</dbReference>
<dbReference type="GO" id="GO:0016887">
    <property type="term" value="F:ATP hydrolysis activity"/>
    <property type="evidence" value="ECO:0007669"/>
    <property type="project" value="InterPro"/>
</dbReference>
<dbReference type="GO" id="GO:0000287">
    <property type="term" value="F:magnesium ion binding"/>
    <property type="evidence" value="ECO:0007669"/>
    <property type="project" value="UniProtKB-UniRule"/>
</dbReference>
<dbReference type="GO" id="GO:0008556">
    <property type="term" value="F:P-type potassium transmembrane transporter activity"/>
    <property type="evidence" value="ECO:0007669"/>
    <property type="project" value="UniProtKB-UniRule"/>
</dbReference>
<dbReference type="CDD" id="cd02078">
    <property type="entry name" value="P-type_ATPase_K"/>
    <property type="match status" value="1"/>
</dbReference>
<dbReference type="FunFam" id="2.70.150.10:FF:000010">
    <property type="entry name" value="Potassium-transporting ATPase ATP-binding subunit"/>
    <property type="match status" value="1"/>
</dbReference>
<dbReference type="FunFam" id="3.40.1110.10:FF:000007">
    <property type="entry name" value="Potassium-transporting ATPase ATP-binding subunit"/>
    <property type="match status" value="1"/>
</dbReference>
<dbReference type="Gene3D" id="3.40.1110.10">
    <property type="entry name" value="Calcium-transporting ATPase, cytoplasmic domain N"/>
    <property type="match status" value="1"/>
</dbReference>
<dbReference type="Gene3D" id="2.70.150.10">
    <property type="entry name" value="Calcium-transporting ATPase, cytoplasmic transduction domain A"/>
    <property type="match status" value="1"/>
</dbReference>
<dbReference type="Gene3D" id="3.40.50.1000">
    <property type="entry name" value="HAD superfamily/HAD-like"/>
    <property type="match status" value="1"/>
</dbReference>
<dbReference type="HAMAP" id="MF_00285">
    <property type="entry name" value="KdpB"/>
    <property type="match status" value="1"/>
</dbReference>
<dbReference type="InterPro" id="IPR023299">
    <property type="entry name" value="ATPase_P-typ_cyto_dom_N"/>
</dbReference>
<dbReference type="InterPro" id="IPR018303">
    <property type="entry name" value="ATPase_P-typ_P_site"/>
</dbReference>
<dbReference type="InterPro" id="IPR023298">
    <property type="entry name" value="ATPase_P-typ_TM_dom_sf"/>
</dbReference>
<dbReference type="InterPro" id="IPR008250">
    <property type="entry name" value="ATPase_P-typ_transduc_dom_A_sf"/>
</dbReference>
<dbReference type="InterPro" id="IPR036412">
    <property type="entry name" value="HAD-like_sf"/>
</dbReference>
<dbReference type="InterPro" id="IPR023214">
    <property type="entry name" value="HAD_sf"/>
</dbReference>
<dbReference type="InterPro" id="IPR006391">
    <property type="entry name" value="P-type_ATPase_bsu_IA"/>
</dbReference>
<dbReference type="InterPro" id="IPR001757">
    <property type="entry name" value="P_typ_ATPase"/>
</dbReference>
<dbReference type="InterPro" id="IPR044492">
    <property type="entry name" value="P_typ_ATPase_HD_dom"/>
</dbReference>
<dbReference type="NCBIfam" id="TIGR01494">
    <property type="entry name" value="ATPase_P-type"/>
    <property type="match status" value="2"/>
</dbReference>
<dbReference type="NCBIfam" id="TIGR01497">
    <property type="entry name" value="kdpB"/>
    <property type="match status" value="1"/>
</dbReference>
<dbReference type="PANTHER" id="PTHR43743">
    <property type="entry name" value="POTASSIUM-TRANSPORTING ATPASE ATP-BINDING SUBUNIT"/>
    <property type="match status" value="1"/>
</dbReference>
<dbReference type="PANTHER" id="PTHR43743:SF1">
    <property type="entry name" value="POTASSIUM-TRANSPORTING ATPASE ATP-BINDING SUBUNIT"/>
    <property type="match status" value="1"/>
</dbReference>
<dbReference type="Pfam" id="PF00122">
    <property type="entry name" value="E1-E2_ATPase"/>
    <property type="match status" value="1"/>
</dbReference>
<dbReference type="Pfam" id="PF00702">
    <property type="entry name" value="Hydrolase"/>
    <property type="match status" value="1"/>
</dbReference>
<dbReference type="PRINTS" id="PR00119">
    <property type="entry name" value="CATATPASE"/>
</dbReference>
<dbReference type="SFLD" id="SFLDG00002">
    <property type="entry name" value="C1.7:_P-type_atpase_like"/>
    <property type="match status" value="1"/>
</dbReference>
<dbReference type="SFLD" id="SFLDF00027">
    <property type="entry name" value="p-type_atpase"/>
    <property type="match status" value="1"/>
</dbReference>
<dbReference type="SUPFAM" id="SSF81653">
    <property type="entry name" value="Calcium ATPase, transduction domain A"/>
    <property type="match status" value="1"/>
</dbReference>
<dbReference type="SUPFAM" id="SSF81665">
    <property type="entry name" value="Calcium ATPase, transmembrane domain M"/>
    <property type="match status" value="1"/>
</dbReference>
<dbReference type="SUPFAM" id="SSF56784">
    <property type="entry name" value="HAD-like"/>
    <property type="match status" value="1"/>
</dbReference>
<dbReference type="SUPFAM" id="SSF81660">
    <property type="entry name" value="Metal cation-transporting ATPase, ATP-binding domain N"/>
    <property type="match status" value="1"/>
</dbReference>
<dbReference type="PROSITE" id="PS00154">
    <property type="entry name" value="ATPASE_E1_E2"/>
    <property type="match status" value="1"/>
</dbReference>
<feature type="chain" id="PRO_1000204850" description="Potassium-transporting ATPase ATP-binding subunit">
    <location>
        <begin position="1"/>
        <end position="682"/>
    </location>
</feature>
<feature type="transmembrane region" description="Helical" evidence="1">
    <location>
        <begin position="34"/>
        <end position="54"/>
    </location>
</feature>
<feature type="transmembrane region" description="Helical" evidence="1">
    <location>
        <begin position="62"/>
        <end position="82"/>
    </location>
</feature>
<feature type="transmembrane region" description="Helical" evidence="1">
    <location>
        <begin position="219"/>
        <end position="239"/>
    </location>
</feature>
<feature type="transmembrane region" description="Helical" evidence="1">
    <location>
        <begin position="254"/>
        <end position="274"/>
    </location>
</feature>
<feature type="transmembrane region" description="Helical" evidence="1">
    <location>
        <begin position="588"/>
        <end position="608"/>
    </location>
</feature>
<feature type="transmembrane region" description="Helical" evidence="1">
    <location>
        <begin position="616"/>
        <end position="636"/>
    </location>
</feature>
<feature type="transmembrane region" description="Helical" evidence="1">
    <location>
        <begin position="656"/>
        <end position="676"/>
    </location>
</feature>
<feature type="active site" description="4-aspartylphosphate intermediate" evidence="1">
    <location>
        <position position="307"/>
    </location>
</feature>
<feature type="binding site" evidence="1">
    <location>
        <position position="344"/>
    </location>
    <ligand>
        <name>ATP</name>
        <dbReference type="ChEBI" id="CHEBI:30616"/>
    </ligand>
</feature>
<feature type="binding site" evidence="1">
    <location>
        <position position="348"/>
    </location>
    <ligand>
        <name>ATP</name>
        <dbReference type="ChEBI" id="CHEBI:30616"/>
    </ligand>
</feature>
<feature type="binding site" evidence="1">
    <location>
        <begin position="377"/>
        <end position="384"/>
    </location>
    <ligand>
        <name>ATP</name>
        <dbReference type="ChEBI" id="CHEBI:30616"/>
    </ligand>
</feature>
<feature type="binding site" evidence="1">
    <location>
        <position position="395"/>
    </location>
    <ligand>
        <name>ATP</name>
        <dbReference type="ChEBI" id="CHEBI:30616"/>
    </ligand>
</feature>
<feature type="binding site" evidence="1">
    <location>
        <position position="518"/>
    </location>
    <ligand>
        <name>Mg(2+)</name>
        <dbReference type="ChEBI" id="CHEBI:18420"/>
    </ligand>
</feature>
<feature type="binding site" evidence="1">
    <location>
        <position position="522"/>
    </location>
    <ligand>
        <name>Mg(2+)</name>
        <dbReference type="ChEBI" id="CHEBI:18420"/>
    </ligand>
</feature>
<comment type="function">
    <text evidence="1">Part of the high-affinity ATP-driven potassium transport (or Kdp) system, which catalyzes the hydrolysis of ATP coupled with the electrogenic transport of potassium into the cytoplasm. This subunit is responsible for energy coupling to the transport system and for the release of the potassium ions to the cytoplasm.</text>
</comment>
<comment type="catalytic activity">
    <reaction evidence="1">
        <text>K(+)(out) + ATP + H2O = K(+)(in) + ADP + phosphate + H(+)</text>
        <dbReference type="Rhea" id="RHEA:16777"/>
        <dbReference type="ChEBI" id="CHEBI:15377"/>
        <dbReference type="ChEBI" id="CHEBI:15378"/>
        <dbReference type="ChEBI" id="CHEBI:29103"/>
        <dbReference type="ChEBI" id="CHEBI:30616"/>
        <dbReference type="ChEBI" id="CHEBI:43474"/>
        <dbReference type="ChEBI" id="CHEBI:456216"/>
        <dbReference type="EC" id="7.2.2.6"/>
    </reaction>
    <physiologicalReaction direction="left-to-right" evidence="1">
        <dbReference type="Rhea" id="RHEA:16778"/>
    </physiologicalReaction>
</comment>
<comment type="subunit">
    <text evidence="1">The system is composed of three essential subunits: KdpA, KdpB and KdpC.</text>
</comment>
<comment type="subcellular location">
    <subcellularLocation>
        <location evidence="1">Cell inner membrane</location>
        <topology evidence="1">Multi-pass membrane protein</topology>
    </subcellularLocation>
</comment>
<comment type="similarity">
    <text evidence="1">Belongs to the cation transport ATPase (P-type) (TC 3.A.3) family. Type IA subfamily.</text>
</comment>
<organism>
    <name type="scientific">Escherichia coli (strain K12 / MC4100 / BW2952)</name>
    <dbReference type="NCBI Taxonomy" id="595496"/>
    <lineage>
        <taxon>Bacteria</taxon>
        <taxon>Pseudomonadati</taxon>
        <taxon>Pseudomonadota</taxon>
        <taxon>Gammaproteobacteria</taxon>
        <taxon>Enterobacterales</taxon>
        <taxon>Enterobacteriaceae</taxon>
        <taxon>Escherichia</taxon>
    </lineage>
</organism>
<sequence>MSRKQLALFEPTLVVQALKEAVKKLNPQAQWRNPVMFIVWIGSLLTTCISIAMASGAMPGNALFSAAISGWLWITVLFANFAEALAEGRSKAQANSLKGVKKTAFARKLREPKYGAAADKVPADQLRKGDIVLVEAGDIIPCDGEVIEGGASVDESAITGESAPVIRESGGDFASVTGGTRILSDWLVIECSVNPGETFLDRMIAMVEGAQRRKTPNEIALTILLIALTIVFLLATATLWPFSAWGGNAVSVTVLVALLVCLIPTTIGGLLSAIGVAGMSRMLGANVIATSGRAVEAAGDVDVLLLDKTGTITLGNRQASEFIPAQGVDEKTLADAAQLASLADETPEGRSIVILAKQRFNLRERDVQSLHATFVPFTAQSRMSGINIDNRMIRKGSVDAIRRHVEANGGHFPTDVDQKVDQVARQGATPLVVVEGSRVLGVIALKDIVKGGIKERFAQLRKMGIKTVMITGDNRLTAAAIAAEAGVDDFLAEATPEAKLALIRQYQAEGRLVAMTGDGTNDAPALAQADVAVAMNSGTQAAKEAGNMVDLDSNPTKLIEVVHIGKQMLMTRGSLTTFSIANDVAKYFAIIPAAFAATYPQLNALNIMCLHSPDSAILSAVIFNALIIVFLIPLALKGVSYKPLTASAMLRRNLWIYGLGGLLVPFIGIKVIDLLLTVCGLV</sequence>
<proteinExistence type="inferred from homology"/>
<accession>C4ZWH3</accession>
<gene>
    <name evidence="1" type="primary">kdpB</name>
    <name type="ordered locus">BWG_0557</name>
</gene>
<evidence type="ECO:0000255" key="1">
    <source>
        <dbReference type="HAMAP-Rule" id="MF_00285"/>
    </source>
</evidence>